<dbReference type="EMBL" id="CP000857">
    <property type="protein sequence ID" value="ACN45301.1"/>
    <property type="molecule type" value="Genomic_DNA"/>
</dbReference>
<dbReference type="RefSeq" id="WP_000249416.1">
    <property type="nucleotide sequence ID" value="NC_012125.1"/>
</dbReference>
<dbReference type="SMR" id="C0PYN4"/>
<dbReference type="KEGG" id="sei:SPC_1135"/>
<dbReference type="HOGENOM" id="CLU_016077_6_2_6"/>
<dbReference type="Proteomes" id="UP000001599">
    <property type="component" value="Chromosome"/>
</dbReference>
<dbReference type="GO" id="GO:0005525">
    <property type="term" value="F:GTP binding"/>
    <property type="evidence" value="ECO:0007669"/>
    <property type="project" value="UniProtKB-UniRule"/>
</dbReference>
<dbReference type="GO" id="GO:0043022">
    <property type="term" value="F:ribosome binding"/>
    <property type="evidence" value="ECO:0007669"/>
    <property type="project" value="TreeGrafter"/>
</dbReference>
<dbReference type="GO" id="GO:0042254">
    <property type="term" value="P:ribosome biogenesis"/>
    <property type="evidence" value="ECO:0007669"/>
    <property type="project" value="UniProtKB-KW"/>
</dbReference>
<dbReference type="CDD" id="cd01894">
    <property type="entry name" value="EngA1"/>
    <property type="match status" value="1"/>
</dbReference>
<dbReference type="CDD" id="cd01895">
    <property type="entry name" value="EngA2"/>
    <property type="match status" value="1"/>
</dbReference>
<dbReference type="FunFam" id="3.30.300.20:FF:000004">
    <property type="entry name" value="GTPase Der"/>
    <property type="match status" value="1"/>
</dbReference>
<dbReference type="FunFam" id="3.40.50.300:FF:000040">
    <property type="entry name" value="GTPase Der"/>
    <property type="match status" value="1"/>
</dbReference>
<dbReference type="FunFam" id="3.40.50.300:FF:000057">
    <property type="entry name" value="GTPase Der"/>
    <property type="match status" value="1"/>
</dbReference>
<dbReference type="Gene3D" id="3.30.300.20">
    <property type="match status" value="1"/>
</dbReference>
<dbReference type="Gene3D" id="3.40.50.300">
    <property type="entry name" value="P-loop containing nucleotide triphosphate hydrolases"/>
    <property type="match status" value="2"/>
</dbReference>
<dbReference type="HAMAP" id="MF_00195">
    <property type="entry name" value="GTPase_Der"/>
    <property type="match status" value="1"/>
</dbReference>
<dbReference type="InterPro" id="IPR031166">
    <property type="entry name" value="G_ENGA"/>
</dbReference>
<dbReference type="InterPro" id="IPR006073">
    <property type="entry name" value="GTP-bd"/>
</dbReference>
<dbReference type="InterPro" id="IPR016484">
    <property type="entry name" value="GTPase_Der"/>
</dbReference>
<dbReference type="InterPro" id="IPR032859">
    <property type="entry name" value="KH_dom-like"/>
</dbReference>
<dbReference type="InterPro" id="IPR015946">
    <property type="entry name" value="KH_dom-like_a/b"/>
</dbReference>
<dbReference type="InterPro" id="IPR027417">
    <property type="entry name" value="P-loop_NTPase"/>
</dbReference>
<dbReference type="InterPro" id="IPR005225">
    <property type="entry name" value="Small_GTP-bd"/>
</dbReference>
<dbReference type="NCBIfam" id="TIGR03594">
    <property type="entry name" value="GTPase_EngA"/>
    <property type="match status" value="1"/>
</dbReference>
<dbReference type="NCBIfam" id="TIGR00231">
    <property type="entry name" value="small_GTP"/>
    <property type="match status" value="2"/>
</dbReference>
<dbReference type="PANTHER" id="PTHR43834">
    <property type="entry name" value="GTPASE DER"/>
    <property type="match status" value="1"/>
</dbReference>
<dbReference type="PANTHER" id="PTHR43834:SF6">
    <property type="entry name" value="GTPASE DER"/>
    <property type="match status" value="1"/>
</dbReference>
<dbReference type="Pfam" id="PF14714">
    <property type="entry name" value="KH_dom-like"/>
    <property type="match status" value="1"/>
</dbReference>
<dbReference type="Pfam" id="PF01926">
    <property type="entry name" value="MMR_HSR1"/>
    <property type="match status" value="2"/>
</dbReference>
<dbReference type="PIRSF" id="PIRSF006485">
    <property type="entry name" value="GTP-binding_EngA"/>
    <property type="match status" value="1"/>
</dbReference>
<dbReference type="PRINTS" id="PR00326">
    <property type="entry name" value="GTP1OBG"/>
</dbReference>
<dbReference type="SUPFAM" id="SSF52540">
    <property type="entry name" value="P-loop containing nucleoside triphosphate hydrolases"/>
    <property type="match status" value="2"/>
</dbReference>
<dbReference type="PROSITE" id="PS51712">
    <property type="entry name" value="G_ENGA"/>
    <property type="match status" value="2"/>
</dbReference>
<comment type="function">
    <text evidence="1">GTPase that plays an essential role in the late steps of ribosome biogenesis.</text>
</comment>
<comment type="subunit">
    <text evidence="1">Associates with the 50S ribosomal subunit.</text>
</comment>
<comment type="similarity">
    <text evidence="1">Belongs to the TRAFAC class TrmE-Era-EngA-EngB-Septin-like GTPase superfamily. EngA (Der) GTPase family.</text>
</comment>
<accession>C0PYN4</accession>
<name>DER_SALPC</name>
<keyword id="KW-0342">GTP-binding</keyword>
<keyword id="KW-0547">Nucleotide-binding</keyword>
<keyword id="KW-0677">Repeat</keyword>
<keyword id="KW-0690">Ribosome biogenesis</keyword>
<feature type="chain" id="PRO_1000124369" description="GTPase Der">
    <location>
        <begin position="1"/>
        <end position="490"/>
    </location>
</feature>
<feature type="domain" description="EngA-type G 1">
    <location>
        <begin position="3"/>
        <end position="166"/>
    </location>
</feature>
<feature type="domain" description="EngA-type G 2">
    <location>
        <begin position="203"/>
        <end position="376"/>
    </location>
</feature>
<feature type="domain" description="KH-like" evidence="1">
    <location>
        <begin position="377"/>
        <end position="461"/>
    </location>
</feature>
<feature type="binding site" evidence="1">
    <location>
        <begin position="9"/>
        <end position="16"/>
    </location>
    <ligand>
        <name>GTP</name>
        <dbReference type="ChEBI" id="CHEBI:37565"/>
        <label>1</label>
    </ligand>
</feature>
<feature type="binding site" evidence="1">
    <location>
        <begin position="56"/>
        <end position="60"/>
    </location>
    <ligand>
        <name>GTP</name>
        <dbReference type="ChEBI" id="CHEBI:37565"/>
        <label>1</label>
    </ligand>
</feature>
<feature type="binding site" evidence="1">
    <location>
        <begin position="118"/>
        <end position="121"/>
    </location>
    <ligand>
        <name>GTP</name>
        <dbReference type="ChEBI" id="CHEBI:37565"/>
        <label>1</label>
    </ligand>
</feature>
<feature type="binding site" evidence="1">
    <location>
        <begin position="209"/>
        <end position="216"/>
    </location>
    <ligand>
        <name>GTP</name>
        <dbReference type="ChEBI" id="CHEBI:37565"/>
        <label>2</label>
    </ligand>
</feature>
<feature type="binding site" evidence="1">
    <location>
        <begin position="256"/>
        <end position="260"/>
    </location>
    <ligand>
        <name>GTP</name>
        <dbReference type="ChEBI" id="CHEBI:37565"/>
        <label>2</label>
    </ligand>
</feature>
<feature type="binding site" evidence="1">
    <location>
        <begin position="321"/>
        <end position="324"/>
    </location>
    <ligand>
        <name>GTP</name>
        <dbReference type="ChEBI" id="CHEBI:37565"/>
        <label>2</label>
    </ligand>
</feature>
<sequence>MVPVVALVGRPNVGKSTLFNRLTRTRDALVADFPGLTRDRKYGRAEVEGREFICIDTGGIDGTEDGVETRMAEQSLLAIEEADVVLFMVDARAGLMPADEAIAKHLRSREKPTFLVANKTDGLDPDQAVVDFYSLGLGEIYPIAASHGRGVLSLLEHVLLPWMDDVAPQEKVDEDAEYWAQFEAEQNGEEAPEDDFDPQSLPIKLAIVGRPNVGKSTLTNRILGEERVVVYDMPGTTRDSIYIPMERDEREYVLIDTAGVRKRGKITDAVEKFSVIKTLQAIEDANVVLLVIDAREGISDQDLSLLGFILNSGRSLVIVVNKWDGLSQEVKEQVKETLDFRLGFIDFARVHFISALHGSGVGNLFESVREAYDSSTRRVSTAMLTRIMTMAVEDHQPPLVRGRRVKLKYAHAGGYNPPIVVIHGNQVKDLPDSYKRYLMNYFRKSLEVMGTPIRIQFKEGENPYANKRNTLTPTQMRKRKRLMKHIKKSK</sequence>
<organism>
    <name type="scientific">Salmonella paratyphi C (strain RKS4594)</name>
    <dbReference type="NCBI Taxonomy" id="476213"/>
    <lineage>
        <taxon>Bacteria</taxon>
        <taxon>Pseudomonadati</taxon>
        <taxon>Pseudomonadota</taxon>
        <taxon>Gammaproteobacteria</taxon>
        <taxon>Enterobacterales</taxon>
        <taxon>Enterobacteriaceae</taxon>
        <taxon>Salmonella</taxon>
    </lineage>
</organism>
<reference key="1">
    <citation type="journal article" date="2009" name="PLoS ONE">
        <title>Salmonella paratyphi C: genetic divergence from Salmonella choleraesuis and pathogenic convergence with Salmonella typhi.</title>
        <authorList>
            <person name="Liu W.-Q."/>
            <person name="Feng Y."/>
            <person name="Wang Y."/>
            <person name="Zou Q.-H."/>
            <person name="Chen F."/>
            <person name="Guo J.-T."/>
            <person name="Peng Y.-H."/>
            <person name="Jin Y."/>
            <person name="Li Y.-G."/>
            <person name="Hu S.-N."/>
            <person name="Johnston R.N."/>
            <person name="Liu G.-R."/>
            <person name="Liu S.-L."/>
        </authorList>
    </citation>
    <scope>NUCLEOTIDE SEQUENCE [LARGE SCALE GENOMIC DNA]</scope>
    <source>
        <strain>RKS4594</strain>
    </source>
</reference>
<proteinExistence type="inferred from homology"/>
<protein>
    <recommendedName>
        <fullName evidence="1">GTPase Der</fullName>
    </recommendedName>
    <alternativeName>
        <fullName evidence="1">GTP-binding protein EngA</fullName>
    </alternativeName>
</protein>
<gene>
    <name evidence="1" type="primary">der</name>
    <name type="synonym">engA</name>
    <name type="ordered locus">SPC_1135</name>
</gene>
<evidence type="ECO:0000255" key="1">
    <source>
        <dbReference type="HAMAP-Rule" id="MF_00195"/>
    </source>
</evidence>